<evidence type="ECO:0000255" key="1"/>
<evidence type="ECO:0000269" key="2">
    <source>
    </source>
</evidence>
<evidence type="ECO:0000269" key="3">
    <source>
    </source>
</evidence>
<evidence type="ECO:0000269" key="4">
    <source>
    </source>
</evidence>
<evidence type="ECO:0000269" key="5">
    <source>
    </source>
</evidence>
<evidence type="ECO:0000303" key="6">
    <source>
    </source>
</evidence>
<evidence type="ECO:0000305" key="7"/>
<evidence type="ECO:0000312" key="8">
    <source>
        <dbReference type="EMBL" id="ABL69698.1"/>
    </source>
</evidence>
<evidence type="ECO:0000312" key="9">
    <source>
        <dbReference type="Proteomes" id="UP000000361"/>
    </source>
</evidence>
<evidence type="ECO:0007744" key="10">
    <source>
        <dbReference type="PDB" id="6CK1"/>
    </source>
</evidence>
<evidence type="ECO:0007829" key="11">
    <source>
        <dbReference type="PDB" id="6CK1"/>
    </source>
</evidence>
<reference evidence="9" key="1">
    <citation type="submission" date="2006-12" db="EMBL/GenBank/DDBJ databases">
        <title>Complete sequence of chromosome 1 of Paracoccus denitrificans PD1222.</title>
        <authorList>
            <person name="Copeland A."/>
            <person name="Lucas S."/>
            <person name="Lapidus A."/>
            <person name="Barry K."/>
            <person name="Detter J.C."/>
            <person name="Glavina del Rio T."/>
            <person name="Hammon N."/>
            <person name="Israni S."/>
            <person name="Dalin E."/>
            <person name="Tice H."/>
            <person name="Pitluck S."/>
            <person name="Munk A.C."/>
            <person name="Brettin T."/>
            <person name="Bruce D."/>
            <person name="Han C."/>
            <person name="Tapia R."/>
            <person name="Gilna P."/>
            <person name="Schmutz J."/>
            <person name="Larimer F."/>
            <person name="Land M."/>
            <person name="Hauser L."/>
            <person name="Kyrpides N."/>
            <person name="Lykidis A."/>
            <person name="Spiro S."/>
            <person name="Richardson D.J."/>
            <person name="Moir J.W.B."/>
            <person name="Ferguson S.J."/>
            <person name="van Spanning R.J.M."/>
            <person name="Richardson P."/>
        </authorList>
    </citation>
    <scope>NUCLEOTIDE SEQUENCE [LARGE SCALE GENOMIC DNA]</scope>
    <source>
        <strain evidence="9">Pd 1222</strain>
    </source>
</reference>
<reference evidence="7" key="2">
    <citation type="journal article" date="2015" name="J. Biol. Chem.">
        <title>AztD, a Periplasmic Zinc Metallochaperone to an ATP-binding Cassette (ABC) Transporter System in Paracoccus denitrificans.</title>
        <authorList>
            <person name="Handali M."/>
            <person name="Roychowdhury H."/>
            <person name="Neupane D.P."/>
            <person name="Yukl E.T."/>
        </authorList>
    </citation>
    <scope>FUNCTION</scope>
    <scope>SUBUNIT</scope>
    <scope>SUBCELLULAR LOCATION</scope>
    <scope>INDUCTION</scope>
</reference>
<reference evidence="7" key="3">
    <citation type="journal article" date="2019" name="Biochemistry">
        <title>Two ABC Transporters and a Periplasmic Metallochaperone Participate in Zinc Acquisition in Paracoccus denitrificans.</title>
        <authorList>
            <person name="Neupane D.P."/>
            <person name="Kumar S."/>
            <person name="Yukl E.T."/>
        </authorList>
    </citation>
    <scope>FUNCTION</scope>
    <scope>DISRUPTION PHENOTYPE</scope>
</reference>
<reference evidence="7" key="4">
    <citation type="journal article" date="2020" name="Biomolecules">
        <title>Structural Features Mediating Zinc Binding and Transfer in the AztABCD Zinc Transporter System.</title>
        <authorList>
            <person name="Meni A."/>
            <person name="Yukl E.T."/>
        </authorList>
    </citation>
    <scope>FUNCTION</scope>
    <scope>MUTAGENESIS OF 23-ASP--GLU-29</scope>
</reference>
<reference evidence="10" key="5">
    <citation type="journal article" date="2019" name="Commun. Biol.">
        <title>Crystal structures of AztD provide mechanistic insights into direct zinc transfer between proteins.</title>
        <authorList>
            <person name="Neupane D.P."/>
            <person name="Fullam S.H."/>
            <person name="Chacon K.N."/>
            <person name="Yukl E.T."/>
        </authorList>
    </citation>
    <scope>X-RAY CRYSTALLOGRAPHY (2.15 ANGSTROMS) IN COMPLEX WITH ZINC</scope>
    <scope>FUNCTION</scope>
    <scope>SUBUNIT</scope>
    <scope>SUBCELLULAR LOCATION</scope>
    <scope>DISULFIDE BOND</scope>
    <scope>MUTAGENESIS OF HIS-99; HIS-102; ASP-104; HIS-124; HIS-167; HIS-218 AND HIS-408</scope>
</reference>
<organism evidence="9">
    <name type="scientific">Paracoccus denitrificans (strain Pd 1222)</name>
    <dbReference type="NCBI Taxonomy" id="318586"/>
    <lineage>
        <taxon>Bacteria</taxon>
        <taxon>Pseudomonadati</taxon>
        <taxon>Pseudomonadota</taxon>
        <taxon>Alphaproteobacteria</taxon>
        <taxon>Rhodobacterales</taxon>
        <taxon>Paracoccaceae</taxon>
        <taxon>Paracoccus</taxon>
    </lineage>
</organism>
<sequence length="408" mass="43173">MLRHLAGASALALTLAGAGFAQDHDHDHEDVTLYRVFVGDHEKGQVTAFDLAEPDHRWTFPTTGQVKLYSVAGGAVVAAVQSDADTVQFIRSGISFHDHGDHRDIEVGDPAAIDASLTGPRPFHLVEHDGKVVLNYDQGGYAEILDGHALAEGKAEPGRFPQARAHHGFVAPLGGNWLSTVASDEKVEGDASVPRLGLQAFDAEGNPAGNLATCTGIHGEAFSGAYLAAGCKEGVLTVKAGANGSEYKLLPYPADLPQGVTTGTLLGSTGIQVFLGNYGPDGLVVIDPVDEPHYRYIKLPFRRVDFALDPAKPSTGYVLTEDGSLHRIDLLKAEIVASAKVTEPYSMDGHWNDPRPRIAMAGDEIVVTDPNAGLVRRIATEDLSERGTVPVEGKPYNIAVTGGSGVTH</sequence>
<name>AZTD_PARDP</name>
<accession>A1B2F4</accession>
<keyword id="KW-0002">3D-structure</keyword>
<keyword id="KW-0143">Chaperone</keyword>
<keyword id="KW-1015">Disulfide bond</keyword>
<keyword id="KW-0479">Metal-binding</keyword>
<keyword id="KW-0574">Periplasm</keyword>
<keyword id="KW-1185">Reference proteome</keyword>
<keyword id="KW-0732">Signal</keyword>
<keyword id="KW-0813">Transport</keyword>
<keyword id="KW-0862">Zinc</keyword>
<dbReference type="EMBL" id="CP000489">
    <property type="protein sequence ID" value="ABL69698.1"/>
    <property type="molecule type" value="Genomic_DNA"/>
</dbReference>
<dbReference type="RefSeq" id="WP_011747897.1">
    <property type="nucleotide sequence ID" value="NC_008686.1"/>
</dbReference>
<dbReference type="PDB" id="6CK1">
    <property type="method" value="X-ray"/>
    <property type="resolution" value="2.15 A"/>
    <property type="chains" value="A/B/C/D=1-408"/>
</dbReference>
<dbReference type="PDBsum" id="6CK1"/>
<dbReference type="SMR" id="A1B2F4"/>
<dbReference type="STRING" id="318586.Pden_1598"/>
<dbReference type="TCDB" id="3.A.1.15.19">
    <property type="family name" value="the atp-binding cassette (abc) superfamily"/>
</dbReference>
<dbReference type="EnsemblBacteria" id="ABL69698">
    <property type="protein sequence ID" value="ABL69698"/>
    <property type="gene ID" value="Pden_1598"/>
</dbReference>
<dbReference type="GeneID" id="93449991"/>
<dbReference type="KEGG" id="pde:Pden_1598"/>
<dbReference type="eggNOG" id="COG3391">
    <property type="taxonomic scope" value="Bacteria"/>
</dbReference>
<dbReference type="HOGENOM" id="CLU_046994_1_0_5"/>
<dbReference type="OrthoDB" id="9810636at2"/>
<dbReference type="Proteomes" id="UP000000361">
    <property type="component" value="Chromosome 1"/>
</dbReference>
<dbReference type="GO" id="GO:0042597">
    <property type="term" value="C:periplasmic space"/>
    <property type="evidence" value="ECO:0000314"/>
    <property type="project" value="UniProtKB"/>
</dbReference>
<dbReference type="GO" id="GO:0140827">
    <property type="term" value="F:zinc chaperone activity"/>
    <property type="evidence" value="ECO:0000314"/>
    <property type="project" value="UniProtKB"/>
</dbReference>
<dbReference type="GO" id="GO:0008270">
    <property type="term" value="F:zinc ion binding"/>
    <property type="evidence" value="ECO:0000314"/>
    <property type="project" value="UniProtKB"/>
</dbReference>
<dbReference type="InterPro" id="IPR047697">
    <property type="entry name" value="AztD-like"/>
</dbReference>
<dbReference type="InterPro" id="IPR011044">
    <property type="entry name" value="Quino_amine_DH_bsu"/>
</dbReference>
<dbReference type="NCBIfam" id="NF038015">
    <property type="entry name" value="AztD"/>
    <property type="match status" value="1"/>
</dbReference>
<dbReference type="SUPFAM" id="SSF50969">
    <property type="entry name" value="YVTN repeat-like/Quinoprotein amine dehydrogenase"/>
    <property type="match status" value="1"/>
</dbReference>
<proteinExistence type="evidence at protein level"/>
<protein>
    <recommendedName>
        <fullName evidence="6">Zinc chaperone AztD</fullName>
    </recommendedName>
</protein>
<gene>
    <name evidence="6" type="primary">aztD</name>
    <name evidence="8" type="ordered locus">Pden_1598</name>
</gene>
<comment type="function">
    <text evidence="2 3 4 5">Acts as a zinc chaperone in the AztABCD zinc transport system (PubMed:26468286, PubMed:30353723, PubMed:31428696, PubMed:32781785). Directly transfers one zinc cation to the solute binding protein AztC; the transfer occurs without the formation of a stable interaction (PubMed:26468286, PubMed:31428696, PubMed:32781785). Binds 3 Zn(2+), two with high affinity and one with low affinity, and transfers only Zn(2+) bound to site 2 to AztC (PubMed:26468286, PubMed:31428696). Likely functions to store zinc in the periplasm and may be important for zinc accumulation in zinc-limited environments (PubMed:32781785).</text>
</comment>
<comment type="subunit">
    <text evidence="2 4">Monomer.</text>
</comment>
<comment type="subcellular location">
    <subcellularLocation>
        <location evidence="2 4">Periplasm</location>
    </subcellularLocation>
</comment>
<comment type="induction">
    <text evidence="2">Up-regulated upon zinc starvation.</text>
</comment>
<comment type="disruption phenotype">
    <text evidence="3">No effect on growth and no effect on zinc cellular level in zinc repleted media (PubMed:30353723). In zinc limited media, growth is reduced in a znuA mutant background and also in an aztC mutant background (PubMed:30353723). In zinc depleted media, zinc cellular levels are reduced and levels are further reduced in a znuA mutant background, an aztC mutant background or a znuA and aztC mutant background (PubMed:30353723).</text>
</comment>
<feature type="signal peptide" evidence="1">
    <location>
        <begin position="1"/>
        <end position="21"/>
    </location>
</feature>
<feature type="chain" id="PRO_5002632552" description="Zinc chaperone AztD" evidence="1">
    <location>
        <begin position="22"/>
        <end position="408"/>
    </location>
</feature>
<feature type="short sequence motif" description="N-terminal Zn(2+)-binding motif; binds a third Zn(2+) with low affinity" evidence="4 5">
    <location>
        <begin position="23"/>
        <end position="29"/>
    </location>
</feature>
<feature type="binding site" evidence="4 10">
    <location>
        <position position="99"/>
    </location>
    <ligand>
        <name>Zn(2+)</name>
        <dbReference type="ChEBI" id="CHEBI:29105"/>
        <label>2</label>
        <note>high affinity</note>
    </ligand>
</feature>
<feature type="binding site" evidence="4 10">
    <location>
        <position position="102"/>
    </location>
    <ligand>
        <name>Zn(2+)</name>
        <dbReference type="ChEBI" id="CHEBI:29105"/>
        <label>2</label>
        <note>high affinity</note>
    </ligand>
</feature>
<feature type="binding site" evidence="4 10">
    <location>
        <position position="104"/>
    </location>
    <ligand>
        <name>Zn(2+)</name>
        <dbReference type="ChEBI" id="CHEBI:29105"/>
        <label>2</label>
        <note>high affinity</note>
    </ligand>
</feature>
<feature type="binding site" evidence="4 10">
    <location>
        <position position="124"/>
    </location>
    <ligand>
        <name>Zn(2+)</name>
        <dbReference type="ChEBI" id="CHEBI:29105"/>
        <label>1</label>
        <note>high affinity</note>
    </ligand>
</feature>
<feature type="binding site" evidence="4 10">
    <location>
        <position position="167"/>
    </location>
    <ligand>
        <name>Zn(2+)</name>
        <dbReference type="ChEBI" id="CHEBI:29105"/>
        <label>1</label>
        <note>high affinity</note>
    </ligand>
</feature>
<feature type="binding site" evidence="4 10">
    <location>
        <position position="218"/>
    </location>
    <ligand>
        <name>Zn(2+)</name>
        <dbReference type="ChEBI" id="CHEBI:29105"/>
        <label>1</label>
        <note>high affinity</note>
    </ligand>
</feature>
<feature type="binding site" evidence="4 10">
    <location>
        <position position="408"/>
    </location>
    <ligand>
        <name>Zn(2+)</name>
        <dbReference type="ChEBI" id="CHEBI:29105"/>
        <label>2</label>
        <note>high affinity</note>
    </ligand>
</feature>
<feature type="disulfide bond" evidence="4 10">
    <location>
        <begin position="214"/>
        <end position="231"/>
    </location>
</feature>
<feature type="mutagenesis site" description="No effect on zinc transfer to AztC. Zinc binding affinity is slightly reduced with a loss of the third binding site and an apparent loss of negative cooperativity." evidence="5">
    <location>
        <begin position="23"/>
        <end position="29"/>
    </location>
</feature>
<feature type="mutagenesis site" description="Loss of zinc binding to site 2 and loss of zinc transfer to AztC; when associated with A-102, A-104 and A-408." evidence="4">
    <original>H</original>
    <variation>A</variation>
    <location>
        <position position="99"/>
    </location>
</feature>
<feature type="mutagenesis site" description="Loss of zinc binding to site 2 and loss of zinc transfer to AztC; when associated with A-99, A-104 and A-408." evidence="4">
    <original>H</original>
    <variation>A</variation>
    <location>
        <position position="102"/>
    </location>
</feature>
<feature type="mutagenesis site" description="Loss of zinc binding to site 2 and loss of zinc transfer to AztC; when associated with A-99, A-102 and A-408." evidence="4">
    <original>D</original>
    <variation>A</variation>
    <location>
        <position position="104"/>
    </location>
</feature>
<feature type="mutagenesis site" description="Loss of zinc binding to site 1 and no effect on zinc transfer to AztC; when associated with A-167 and A-218." evidence="4">
    <original>H</original>
    <variation>A</variation>
    <location>
        <position position="124"/>
    </location>
</feature>
<feature type="mutagenesis site" description="Loss of zinc binding to site 1 and no effect on zinc transfer to AztC; when associated with A-124 and A-218." evidence="4">
    <original>H</original>
    <variation>A</variation>
    <location>
        <position position="167"/>
    </location>
</feature>
<feature type="mutagenesis site" description="Loss of zinc binding to site 1 and no effect on zinc transfer to AztC; when associated with A-124 and A-167." evidence="4">
    <original>H</original>
    <variation>A</variation>
    <location>
        <position position="218"/>
    </location>
</feature>
<feature type="mutagenesis site" description="Loss of zinc binding to site 2 and loss of zinc transfer to AztC; when associated with A-99, A-102 and A-104." evidence="4">
    <original>H</original>
    <variation>A</variation>
    <location>
        <position position="408"/>
    </location>
</feature>
<feature type="strand" evidence="11">
    <location>
        <begin position="32"/>
        <end position="52"/>
    </location>
</feature>
<feature type="strand" evidence="11">
    <location>
        <begin position="56"/>
        <end position="61"/>
    </location>
</feature>
<feature type="strand" evidence="11">
    <location>
        <begin position="67"/>
        <end position="71"/>
    </location>
</feature>
<feature type="helix" evidence="11">
    <location>
        <begin position="72"/>
        <end position="74"/>
    </location>
</feature>
<feature type="strand" evidence="11">
    <location>
        <begin position="76"/>
        <end position="81"/>
    </location>
</feature>
<feature type="turn" evidence="11">
    <location>
        <begin position="82"/>
        <end position="85"/>
    </location>
</feature>
<feature type="strand" evidence="11">
    <location>
        <begin position="86"/>
        <end position="91"/>
    </location>
</feature>
<feature type="strand" evidence="11">
    <location>
        <begin position="94"/>
        <end position="97"/>
    </location>
</feature>
<feature type="strand" evidence="11">
    <location>
        <begin position="104"/>
        <end position="107"/>
    </location>
</feature>
<feature type="strand" evidence="11">
    <location>
        <begin position="122"/>
        <end position="128"/>
    </location>
</feature>
<feature type="strand" evidence="11">
    <location>
        <begin position="131"/>
        <end position="136"/>
    </location>
</feature>
<feature type="turn" evidence="11">
    <location>
        <begin position="137"/>
        <end position="139"/>
    </location>
</feature>
<feature type="strand" evidence="11">
    <location>
        <begin position="140"/>
        <end position="146"/>
    </location>
</feature>
<feature type="helix" evidence="11">
    <location>
        <begin position="147"/>
        <end position="151"/>
    </location>
</feature>
<feature type="strand" evidence="11">
    <location>
        <begin position="158"/>
        <end position="161"/>
    </location>
</feature>
<feature type="strand" evidence="11">
    <location>
        <begin position="170"/>
        <end position="173"/>
    </location>
</feature>
<feature type="strand" evidence="11">
    <location>
        <begin position="176"/>
        <end position="182"/>
    </location>
</feature>
<feature type="strand" evidence="11">
    <location>
        <begin position="195"/>
        <end position="201"/>
    </location>
</feature>
<feature type="strand" evidence="11">
    <location>
        <begin position="218"/>
        <end position="223"/>
    </location>
</feature>
<feature type="strand" evidence="11">
    <location>
        <begin position="226"/>
        <end position="230"/>
    </location>
</feature>
<feature type="strand" evidence="11">
    <location>
        <begin position="232"/>
        <end position="241"/>
    </location>
</feature>
<feature type="strand" evidence="11">
    <location>
        <begin position="244"/>
        <end position="251"/>
    </location>
</feature>
<feature type="strand" evidence="11">
    <location>
        <begin position="265"/>
        <end position="267"/>
    </location>
</feature>
<feature type="strand" evidence="11">
    <location>
        <begin position="269"/>
        <end position="272"/>
    </location>
</feature>
<feature type="strand" evidence="11">
    <location>
        <begin position="274"/>
        <end position="277"/>
    </location>
</feature>
<feature type="strand" evidence="11">
    <location>
        <begin position="282"/>
        <end position="286"/>
    </location>
</feature>
<feature type="strand" evidence="11">
    <location>
        <begin position="288"/>
        <end position="291"/>
    </location>
</feature>
<feature type="strand" evidence="11">
    <location>
        <begin position="294"/>
        <end position="298"/>
    </location>
</feature>
<feature type="strand" evidence="11">
    <location>
        <begin position="303"/>
        <end position="308"/>
    </location>
</feature>
<feature type="strand" evidence="11">
    <location>
        <begin position="315"/>
        <end position="320"/>
    </location>
</feature>
<feature type="strand" evidence="11">
    <location>
        <begin position="323"/>
        <end position="329"/>
    </location>
</feature>
<feature type="turn" evidence="11">
    <location>
        <begin position="330"/>
        <end position="333"/>
    </location>
</feature>
<feature type="strand" evidence="11">
    <location>
        <begin position="334"/>
        <end position="340"/>
    </location>
</feature>
<feature type="strand" evidence="11">
    <location>
        <begin position="358"/>
        <end position="361"/>
    </location>
</feature>
<feature type="strand" evidence="11">
    <location>
        <begin position="364"/>
        <end position="369"/>
    </location>
</feature>
<feature type="turn" evidence="11">
    <location>
        <begin position="370"/>
        <end position="373"/>
    </location>
</feature>
<feature type="strand" evidence="11">
    <location>
        <begin position="374"/>
        <end position="379"/>
    </location>
</feature>
<feature type="turn" evidence="11">
    <location>
        <begin position="380"/>
        <end position="382"/>
    </location>
</feature>
<feature type="strand" evidence="11">
    <location>
        <begin position="385"/>
        <end position="390"/>
    </location>
</feature>
<feature type="strand" evidence="11">
    <location>
        <begin position="395"/>
        <end position="404"/>
    </location>
</feature>